<dbReference type="EC" id="2.7.1.24" evidence="1"/>
<dbReference type="EMBL" id="AE014074">
    <property type="protein sequence ID" value="AAM78955.1"/>
    <property type="molecule type" value="Genomic_DNA"/>
</dbReference>
<dbReference type="RefSeq" id="WP_011017469.1">
    <property type="nucleotide sequence ID" value="NC_004070.1"/>
</dbReference>
<dbReference type="SMR" id="P0DA44"/>
<dbReference type="KEGG" id="spg:SpyM3_0348"/>
<dbReference type="HOGENOM" id="CLU_057180_0_0_9"/>
<dbReference type="UniPathway" id="UPA00241">
    <property type="reaction ID" value="UER00356"/>
</dbReference>
<dbReference type="Proteomes" id="UP000000564">
    <property type="component" value="Chromosome"/>
</dbReference>
<dbReference type="GO" id="GO:0005737">
    <property type="term" value="C:cytoplasm"/>
    <property type="evidence" value="ECO:0007669"/>
    <property type="project" value="UniProtKB-SubCell"/>
</dbReference>
<dbReference type="GO" id="GO:0005524">
    <property type="term" value="F:ATP binding"/>
    <property type="evidence" value="ECO:0007669"/>
    <property type="project" value="UniProtKB-UniRule"/>
</dbReference>
<dbReference type="GO" id="GO:0004140">
    <property type="term" value="F:dephospho-CoA kinase activity"/>
    <property type="evidence" value="ECO:0007669"/>
    <property type="project" value="UniProtKB-UniRule"/>
</dbReference>
<dbReference type="GO" id="GO:0015937">
    <property type="term" value="P:coenzyme A biosynthetic process"/>
    <property type="evidence" value="ECO:0007669"/>
    <property type="project" value="UniProtKB-UniRule"/>
</dbReference>
<dbReference type="CDD" id="cd02022">
    <property type="entry name" value="DPCK"/>
    <property type="match status" value="1"/>
</dbReference>
<dbReference type="FunFam" id="3.40.50.300:FF:000991">
    <property type="entry name" value="Dephospho-CoA kinase"/>
    <property type="match status" value="1"/>
</dbReference>
<dbReference type="Gene3D" id="3.40.50.300">
    <property type="entry name" value="P-loop containing nucleotide triphosphate hydrolases"/>
    <property type="match status" value="1"/>
</dbReference>
<dbReference type="HAMAP" id="MF_00376">
    <property type="entry name" value="Dephospho_CoA_kinase"/>
    <property type="match status" value="1"/>
</dbReference>
<dbReference type="InterPro" id="IPR001977">
    <property type="entry name" value="Depp_CoAkinase"/>
</dbReference>
<dbReference type="InterPro" id="IPR027417">
    <property type="entry name" value="P-loop_NTPase"/>
</dbReference>
<dbReference type="NCBIfam" id="TIGR00152">
    <property type="entry name" value="dephospho-CoA kinase"/>
    <property type="match status" value="1"/>
</dbReference>
<dbReference type="PANTHER" id="PTHR10695:SF46">
    <property type="entry name" value="BIFUNCTIONAL COENZYME A SYNTHASE-RELATED"/>
    <property type="match status" value="1"/>
</dbReference>
<dbReference type="PANTHER" id="PTHR10695">
    <property type="entry name" value="DEPHOSPHO-COA KINASE-RELATED"/>
    <property type="match status" value="1"/>
</dbReference>
<dbReference type="Pfam" id="PF01121">
    <property type="entry name" value="CoaE"/>
    <property type="match status" value="1"/>
</dbReference>
<dbReference type="SUPFAM" id="SSF52540">
    <property type="entry name" value="P-loop containing nucleoside triphosphate hydrolases"/>
    <property type="match status" value="1"/>
</dbReference>
<dbReference type="PROSITE" id="PS51219">
    <property type="entry name" value="DPCK"/>
    <property type="match status" value="1"/>
</dbReference>
<proteinExistence type="inferred from homology"/>
<accession>P0DA44</accession>
<accession>P63833</accession>
<accession>Q8P249</accession>
<comment type="function">
    <text evidence="1">Catalyzes the phosphorylation of the 3'-hydroxyl group of dephosphocoenzyme A to form coenzyme A.</text>
</comment>
<comment type="catalytic activity">
    <reaction evidence="1">
        <text>3'-dephospho-CoA + ATP = ADP + CoA + H(+)</text>
        <dbReference type="Rhea" id="RHEA:18245"/>
        <dbReference type="ChEBI" id="CHEBI:15378"/>
        <dbReference type="ChEBI" id="CHEBI:30616"/>
        <dbReference type="ChEBI" id="CHEBI:57287"/>
        <dbReference type="ChEBI" id="CHEBI:57328"/>
        <dbReference type="ChEBI" id="CHEBI:456216"/>
        <dbReference type="EC" id="2.7.1.24"/>
    </reaction>
</comment>
<comment type="pathway">
    <text evidence="1">Cofactor biosynthesis; coenzyme A biosynthesis; CoA from (R)-pantothenate: step 5/5.</text>
</comment>
<comment type="subcellular location">
    <subcellularLocation>
        <location evidence="1">Cytoplasm</location>
    </subcellularLocation>
</comment>
<comment type="similarity">
    <text evidence="1">Belongs to the CoaE family.</text>
</comment>
<feature type="chain" id="PRO_0000173015" description="Dephospho-CoA kinase">
    <location>
        <begin position="1"/>
        <end position="197"/>
    </location>
</feature>
<feature type="domain" description="DPCK" evidence="1">
    <location>
        <begin position="2"/>
        <end position="197"/>
    </location>
</feature>
<feature type="binding site" evidence="1">
    <location>
        <begin position="10"/>
        <end position="15"/>
    </location>
    <ligand>
        <name>ATP</name>
        <dbReference type="ChEBI" id="CHEBI:30616"/>
    </ligand>
</feature>
<keyword id="KW-0067">ATP-binding</keyword>
<keyword id="KW-0173">Coenzyme A biosynthesis</keyword>
<keyword id="KW-0963">Cytoplasm</keyword>
<keyword id="KW-0418">Kinase</keyword>
<keyword id="KW-0547">Nucleotide-binding</keyword>
<keyword id="KW-0808">Transferase</keyword>
<reference key="1">
    <citation type="journal article" date="2002" name="Proc. Natl. Acad. Sci. U.S.A.">
        <title>Genome sequence of a serotype M3 strain of group A Streptococcus: phage-encoded toxins, the high-virulence phenotype, and clone emergence.</title>
        <authorList>
            <person name="Beres S.B."/>
            <person name="Sylva G.L."/>
            <person name="Barbian K.D."/>
            <person name="Lei B."/>
            <person name="Hoff J.S."/>
            <person name="Mammarella N.D."/>
            <person name="Liu M.-Y."/>
            <person name="Smoot J.C."/>
            <person name="Porcella S.F."/>
            <person name="Parkins L.D."/>
            <person name="Campbell D.S."/>
            <person name="Smith T.M."/>
            <person name="McCormick J.K."/>
            <person name="Leung D.Y.M."/>
            <person name="Schlievert P.M."/>
            <person name="Musser J.M."/>
        </authorList>
    </citation>
    <scope>NUCLEOTIDE SEQUENCE [LARGE SCALE GENOMIC DNA]</scope>
    <source>
        <strain>ATCC BAA-595 / MGAS315</strain>
    </source>
</reference>
<evidence type="ECO:0000255" key="1">
    <source>
        <dbReference type="HAMAP-Rule" id="MF_00376"/>
    </source>
</evidence>
<protein>
    <recommendedName>
        <fullName evidence="1">Dephospho-CoA kinase</fullName>
        <ecNumber evidence="1">2.7.1.24</ecNumber>
    </recommendedName>
    <alternativeName>
        <fullName evidence="1">Dephosphocoenzyme A kinase</fullName>
    </alternativeName>
</protein>
<organism>
    <name type="scientific">Streptococcus pyogenes serotype M3 (strain ATCC BAA-595 / MGAS315)</name>
    <dbReference type="NCBI Taxonomy" id="198466"/>
    <lineage>
        <taxon>Bacteria</taxon>
        <taxon>Bacillati</taxon>
        <taxon>Bacillota</taxon>
        <taxon>Bacilli</taxon>
        <taxon>Lactobacillales</taxon>
        <taxon>Streptococcaceae</taxon>
        <taxon>Streptococcus</taxon>
    </lineage>
</organism>
<sequence>MIIGITGGIASGKSTVVKVIRKAGYQVIDADQVVHDLQEKGGRLYEALREAFGNQILKADGELDRTKLSEMLFSNPDNMATSSAIQNQIIKEELAAKRDHLAQSQAIFFMDIPLLMELGYQDWFDAIWLVYVDAQTQLQRLMARNRLDKGKARQRIASQLPIEEKKPYASLVIDNNGDMETLIKQVQSALLSLANPR</sequence>
<gene>
    <name evidence="1" type="primary">coaE</name>
    <name type="ordered locus">SpyM3_0348</name>
</gene>
<name>COAE_STRP3</name>